<feature type="chain" id="PRO_0000101623" description="Ribosomal RNA small subunit methyltransferase A">
    <location>
        <begin position="1"/>
        <end position="290"/>
    </location>
</feature>
<feature type="binding site" evidence="1">
    <location>
        <position position="27"/>
    </location>
    <ligand>
        <name>S-adenosyl-L-methionine</name>
        <dbReference type="ChEBI" id="CHEBI:59789"/>
    </ligand>
</feature>
<feature type="binding site" evidence="1">
    <location>
        <position position="29"/>
    </location>
    <ligand>
        <name>S-adenosyl-L-methionine</name>
        <dbReference type="ChEBI" id="CHEBI:59789"/>
    </ligand>
</feature>
<feature type="binding site" evidence="1">
    <location>
        <position position="54"/>
    </location>
    <ligand>
        <name>S-adenosyl-L-methionine</name>
        <dbReference type="ChEBI" id="CHEBI:59789"/>
    </ligand>
</feature>
<feature type="binding site" evidence="1">
    <location>
        <position position="75"/>
    </location>
    <ligand>
        <name>S-adenosyl-L-methionine</name>
        <dbReference type="ChEBI" id="CHEBI:59789"/>
    </ligand>
</feature>
<feature type="binding site" evidence="1">
    <location>
        <position position="100"/>
    </location>
    <ligand>
        <name>S-adenosyl-L-methionine</name>
        <dbReference type="ChEBI" id="CHEBI:59789"/>
    </ligand>
</feature>
<feature type="binding site" evidence="1">
    <location>
        <position position="125"/>
    </location>
    <ligand>
        <name>S-adenosyl-L-methionine</name>
        <dbReference type="ChEBI" id="CHEBI:59789"/>
    </ligand>
</feature>
<dbReference type="EC" id="2.1.1.182" evidence="1"/>
<dbReference type="EMBL" id="CP000023">
    <property type="protein sequence ID" value="AAV61398.1"/>
    <property type="molecule type" value="Genomic_DNA"/>
</dbReference>
<dbReference type="RefSeq" id="WP_011226581.1">
    <property type="nucleotide sequence ID" value="NC_006448.1"/>
</dbReference>
<dbReference type="SMR" id="Q5M2L6"/>
<dbReference type="STRING" id="264199.stu1799"/>
<dbReference type="GeneID" id="66899530"/>
<dbReference type="KEGG" id="stl:stu1799"/>
<dbReference type="PATRIC" id="fig|264199.4.peg.1776"/>
<dbReference type="eggNOG" id="COG0030">
    <property type="taxonomic scope" value="Bacteria"/>
</dbReference>
<dbReference type="HOGENOM" id="CLU_041220_0_0_9"/>
<dbReference type="Proteomes" id="UP000001170">
    <property type="component" value="Chromosome"/>
</dbReference>
<dbReference type="GO" id="GO:0005829">
    <property type="term" value="C:cytosol"/>
    <property type="evidence" value="ECO:0007669"/>
    <property type="project" value="TreeGrafter"/>
</dbReference>
<dbReference type="GO" id="GO:0052908">
    <property type="term" value="F:16S rRNA (adenine(1518)-N(6)/adenine(1519)-N(6))-dimethyltransferase activity"/>
    <property type="evidence" value="ECO:0007669"/>
    <property type="project" value="UniProtKB-EC"/>
</dbReference>
<dbReference type="GO" id="GO:0003723">
    <property type="term" value="F:RNA binding"/>
    <property type="evidence" value="ECO:0007669"/>
    <property type="project" value="UniProtKB-KW"/>
</dbReference>
<dbReference type="CDD" id="cd02440">
    <property type="entry name" value="AdoMet_MTases"/>
    <property type="match status" value="1"/>
</dbReference>
<dbReference type="FunFam" id="3.40.50.150:FF:000023">
    <property type="entry name" value="Ribosomal RNA small subunit methyltransferase A"/>
    <property type="match status" value="1"/>
</dbReference>
<dbReference type="Gene3D" id="1.10.8.100">
    <property type="entry name" value="Ribosomal RNA adenine dimethylase-like, domain 2"/>
    <property type="match status" value="1"/>
</dbReference>
<dbReference type="Gene3D" id="3.40.50.150">
    <property type="entry name" value="Vaccinia Virus protein VP39"/>
    <property type="match status" value="1"/>
</dbReference>
<dbReference type="HAMAP" id="MF_00607">
    <property type="entry name" value="16SrRNA_methyltr_A"/>
    <property type="match status" value="1"/>
</dbReference>
<dbReference type="InterPro" id="IPR001737">
    <property type="entry name" value="KsgA/Erm"/>
</dbReference>
<dbReference type="InterPro" id="IPR023165">
    <property type="entry name" value="rRNA_Ade_diMease-like_C"/>
</dbReference>
<dbReference type="InterPro" id="IPR020596">
    <property type="entry name" value="rRNA_Ade_Mease_Trfase_CS"/>
</dbReference>
<dbReference type="InterPro" id="IPR020598">
    <property type="entry name" value="rRNA_Ade_methylase_Trfase_N"/>
</dbReference>
<dbReference type="InterPro" id="IPR011530">
    <property type="entry name" value="rRNA_adenine_dimethylase"/>
</dbReference>
<dbReference type="InterPro" id="IPR029063">
    <property type="entry name" value="SAM-dependent_MTases_sf"/>
</dbReference>
<dbReference type="NCBIfam" id="TIGR00755">
    <property type="entry name" value="ksgA"/>
    <property type="match status" value="1"/>
</dbReference>
<dbReference type="PANTHER" id="PTHR11727">
    <property type="entry name" value="DIMETHYLADENOSINE TRANSFERASE"/>
    <property type="match status" value="1"/>
</dbReference>
<dbReference type="PANTHER" id="PTHR11727:SF7">
    <property type="entry name" value="DIMETHYLADENOSINE TRANSFERASE-RELATED"/>
    <property type="match status" value="1"/>
</dbReference>
<dbReference type="Pfam" id="PF00398">
    <property type="entry name" value="RrnaAD"/>
    <property type="match status" value="1"/>
</dbReference>
<dbReference type="SMART" id="SM00650">
    <property type="entry name" value="rADc"/>
    <property type="match status" value="1"/>
</dbReference>
<dbReference type="SUPFAM" id="SSF53335">
    <property type="entry name" value="S-adenosyl-L-methionine-dependent methyltransferases"/>
    <property type="match status" value="1"/>
</dbReference>
<dbReference type="PROSITE" id="PS01131">
    <property type="entry name" value="RRNA_A_DIMETH"/>
    <property type="match status" value="1"/>
</dbReference>
<dbReference type="PROSITE" id="PS51689">
    <property type="entry name" value="SAM_RNA_A_N6_MT"/>
    <property type="match status" value="1"/>
</dbReference>
<gene>
    <name evidence="1" type="primary">rsmA</name>
    <name evidence="1" type="synonym">ksgA</name>
    <name type="ordered locus">stu1799</name>
</gene>
<organism>
    <name type="scientific">Streptococcus thermophilus (strain ATCC BAA-250 / LMG 18311)</name>
    <dbReference type="NCBI Taxonomy" id="264199"/>
    <lineage>
        <taxon>Bacteria</taxon>
        <taxon>Bacillati</taxon>
        <taxon>Bacillota</taxon>
        <taxon>Bacilli</taxon>
        <taxon>Lactobacillales</taxon>
        <taxon>Streptococcaceae</taxon>
        <taxon>Streptococcus</taxon>
    </lineage>
</organism>
<sequence>MRIADYSVTKAVLERHGFTFKKSFGQNFLTDTNILQKIVDTAEINKNVNVIEIGPGIGALTEFLAENASEVMAFEIDERLVPILEDTLRDHDNVKVINEDVLKADLQTRVKEFENPDLPIKVVANLPYYITTPILMHLIESKIPFSEFVVMMQKEVADRISAEPNTKAYGSLSIAVQYYMTTKMAFAVPRTVFVPAPNVDSAILKMTRRKQPLVEVKDEDFFFRVSKASFLHRRKTLWNNLTSHFGKSEEVKNKLDQALENAAIKPSIRGEALSISDFARLSDALREAGL</sequence>
<protein>
    <recommendedName>
        <fullName evidence="1">Ribosomal RNA small subunit methyltransferase A</fullName>
        <ecNumber evidence="1">2.1.1.182</ecNumber>
    </recommendedName>
    <alternativeName>
        <fullName evidence="1">16S rRNA (adenine(1518)-N(6)/adenine(1519)-N(6))-dimethyltransferase</fullName>
    </alternativeName>
    <alternativeName>
        <fullName evidence="1">16S rRNA dimethyladenosine transferase</fullName>
    </alternativeName>
    <alternativeName>
        <fullName evidence="1">16S rRNA dimethylase</fullName>
    </alternativeName>
    <alternativeName>
        <fullName evidence="1">S-adenosylmethionine-6-N', N'-adenosyl(rRNA) dimethyltransferase</fullName>
    </alternativeName>
</protein>
<keyword id="KW-0963">Cytoplasm</keyword>
<keyword id="KW-0489">Methyltransferase</keyword>
<keyword id="KW-1185">Reference proteome</keyword>
<keyword id="KW-0694">RNA-binding</keyword>
<keyword id="KW-0698">rRNA processing</keyword>
<keyword id="KW-0949">S-adenosyl-L-methionine</keyword>
<keyword id="KW-0808">Transferase</keyword>
<evidence type="ECO:0000255" key="1">
    <source>
        <dbReference type="HAMAP-Rule" id="MF_00607"/>
    </source>
</evidence>
<proteinExistence type="inferred from homology"/>
<comment type="function">
    <text evidence="1">Specifically dimethylates two adjacent adenosines (A1518 and A1519) in the loop of a conserved hairpin near the 3'-end of 16S rRNA in the 30S particle. May play a critical role in biogenesis of 30S subunits.</text>
</comment>
<comment type="catalytic activity">
    <reaction evidence="1">
        <text>adenosine(1518)/adenosine(1519) in 16S rRNA + 4 S-adenosyl-L-methionine = N(6)-dimethyladenosine(1518)/N(6)-dimethyladenosine(1519) in 16S rRNA + 4 S-adenosyl-L-homocysteine + 4 H(+)</text>
        <dbReference type="Rhea" id="RHEA:19609"/>
        <dbReference type="Rhea" id="RHEA-COMP:10232"/>
        <dbReference type="Rhea" id="RHEA-COMP:10233"/>
        <dbReference type="ChEBI" id="CHEBI:15378"/>
        <dbReference type="ChEBI" id="CHEBI:57856"/>
        <dbReference type="ChEBI" id="CHEBI:59789"/>
        <dbReference type="ChEBI" id="CHEBI:74411"/>
        <dbReference type="ChEBI" id="CHEBI:74493"/>
        <dbReference type="EC" id="2.1.1.182"/>
    </reaction>
</comment>
<comment type="subcellular location">
    <subcellularLocation>
        <location evidence="1">Cytoplasm</location>
    </subcellularLocation>
</comment>
<comment type="similarity">
    <text evidence="1">Belongs to the class I-like SAM-binding methyltransferase superfamily. rRNA adenine N(6)-methyltransferase family. RsmA subfamily.</text>
</comment>
<accession>Q5M2L6</accession>
<name>RSMA_STRT2</name>
<reference key="1">
    <citation type="journal article" date="2004" name="Nat. Biotechnol.">
        <title>Complete sequence and comparative genome analysis of the dairy bacterium Streptococcus thermophilus.</title>
        <authorList>
            <person name="Bolotin A."/>
            <person name="Quinquis B."/>
            <person name="Renault P."/>
            <person name="Sorokin A."/>
            <person name="Ehrlich S.D."/>
            <person name="Kulakauskas S."/>
            <person name="Lapidus A."/>
            <person name="Goltsman E."/>
            <person name="Mazur M."/>
            <person name="Pusch G.D."/>
            <person name="Fonstein M."/>
            <person name="Overbeek R."/>
            <person name="Kyprides N."/>
            <person name="Purnelle B."/>
            <person name="Prozzi D."/>
            <person name="Ngui K."/>
            <person name="Masuy D."/>
            <person name="Hancy F."/>
            <person name="Burteau S."/>
            <person name="Boutry M."/>
            <person name="Delcour J."/>
            <person name="Goffeau A."/>
            <person name="Hols P."/>
        </authorList>
    </citation>
    <scope>NUCLEOTIDE SEQUENCE [LARGE SCALE GENOMIC DNA]</scope>
    <source>
        <strain>ATCC BAA-250 / LMG 18311</strain>
    </source>
</reference>